<keyword id="KW-0808">Transferase</keyword>
<sequence length="314" mass="34041">MPEAAVLIDPVPTMDAEAEVVHPVGIEMVHRTRPEDAFPRNWVRLGRDRFAVEAVLPHDHPFFAPVGDDLHDPLLVAEAMRQAAMLAFHAGYGIPLGYHFLLTELDYVCHPEHLGVGGEPTEIGLEVFCSDLKWRAGLPAQGRVGWAVHRGDRLAATGVAATRFSTPKAYRRMRGDVPVEGISLPETAPVPASPAGRARVEDVVLSGTGREGVWELRVDTRHPTLFQRPNDHVPGMLLLEAARQAACLVAGPAGIVPVEARTRFHRYSEFGSPCWIGAVVQPGADEDTVTVRVTGHQDGETVFSTVLSGPRAHG</sequence>
<evidence type="ECO:0000269" key="1">
    <source>
    </source>
</evidence>
<evidence type="ECO:0000305" key="2"/>
<evidence type="ECO:0000312" key="3">
    <source>
        <dbReference type="EMBL" id="BAG23718.1"/>
    </source>
</evidence>
<protein>
    <recommendedName>
        <fullName evidence="2">2-oxo-3-(phosphooxy)propyl 3-oxoalkanoate synthase</fullName>
        <ecNumber evidence="1">2.3.1.277</ecNumber>
    </recommendedName>
    <alternativeName>
        <fullName evidence="2">A-factor biosynthesis enzyme</fullName>
    </alternativeName>
</protein>
<comment type="function">
    <text evidence="1">Involved in the biosynthesis of A factor (2-isocapryloyl-3R-hydroxymethyl-gamma-butyrolactone), a gamma-butyrolactone autoregulator that triggers secondary metabolism and morphogenesis in Streptomyces (PubMed:17277085). Catalyzes beta-ketoacyl transfer from 8-methyl-3-oxononanoyl-acyl carrier protein (ACP) to the hydroxyl group of dihydroxyacetone phosphate (DHAP), thus producing an 8-methyl-3-oxononanoyl-DHAP ester (PubMed:17277085).</text>
</comment>
<comment type="catalytic activity">
    <reaction evidence="1">
        <text>a medium-chain 3-oxoacyl-[ACP] + dihydroxyacetone phosphate = a (4-alkanoyl-5-oxo-2,5-dihydrofuran-3-yl)methyl phosphate + holo-[ACP] + H2O</text>
        <dbReference type="Rhea" id="RHEA:84095"/>
        <dbReference type="Rhea" id="RHEA-COMP:9685"/>
        <dbReference type="Rhea" id="RHEA-COMP:14764"/>
        <dbReference type="ChEBI" id="CHEBI:15377"/>
        <dbReference type="ChEBI" id="CHEBI:57642"/>
        <dbReference type="ChEBI" id="CHEBI:64479"/>
        <dbReference type="ChEBI" id="CHEBI:138603"/>
        <dbReference type="ChEBI" id="CHEBI:141052"/>
        <dbReference type="EC" id="2.3.1.277"/>
    </reaction>
</comment>
<comment type="biophysicochemical properties">
    <kinetics>
        <KM evidence="1">204.6 uM for DHAP</KM>
        <text evidence="1">kcat is 2.0 min(-1).</text>
    </kinetics>
    <phDependence>
        <text evidence="1">Optimum pH is 6.5-7.5.</text>
    </phDependence>
    <temperatureDependence>
        <text evidence="1">Optimum temperature is 15 degrees Celsius.</text>
    </temperatureDependence>
</comment>
<comment type="subunit">
    <text evidence="1">Monomer.</text>
</comment>
<comment type="similarity">
    <text evidence="2">Belongs to the AfsA family.</text>
</comment>
<feature type="chain" id="PRO_0000450066" description="2-oxo-3-(phosphooxy)propyl 3-oxoalkanoate synthase">
    <location>
        <begin position="1"/>
        <end position="314"/>
    </location>
</feature>
<gene>
    <name type="primary">afsA</name>
    <name evidence="3" type="ordered locus">SGR_6889</name>
</gene>
<reference key="1">
    <citation type="journal article" date="2008" name="J. Bacteriol.">
        <title>Genome sequence of the streptomycin-producing microorganism Streptomyces griseus IFO 13350.</title>
        <authorList>
            <person name="Ohnishi Y."/>
            <person name="Ishikawa J."/>
            <person name="Hara H."/>
            <person name="Suzuki H."/>
            <person name="Ikenoya M."/>
            <person name="Ikeda H."/>
            <person name="Yamashita A."/>
            <person name="Hattori M."/>
            <person name="Horinouchi S."/>
        </authorList>
    </citation>
    <scope>NUCLEOTIDE SEQUENCE [LARGE SCALE GENOMIC DNA]</scope>
    <source>
        <strain>JCM 4626 / CBS 651.72 / NBRC 13350 / KCC S-0626 / ISP 5235</strain>
    </source>
</reference>
<reference key="2">
    <citation type="journal article" date="2007" name="Proc. Natl. Acad. Sci. U.S.A.">
        <title>Biosynthesis of gamma-butyrolactone autoregulators that switch on secondary metabolism and morphological development in Streptomyces.</title>
        <authorList>
            <person name="Kato J.Y."/>
            <person name="Funa N."/>
            <person name="Watanabe H."/>
            <person name="Ohnishi Y."/>
            <person name="Horinouchi S."/>
        </authorList>
    </citation>
    <scope>FUNCTION</scope>
    <scope>CATALYTIC ACTIVITY</scope>
    <scope>BIOPHYSICOCHEMICAL PROPERTIES</scope>
    <scope>SUBUNIT</scope>
    <source>
        <strain>JCM 4626 / CBS 651.72 / NBRC 13350 / KCC S-0626 / ISP 5235</strain>
    </source>
</reference>
<organism>
    <name type="scientific">Streptomyces griseus subsp. griseus (strain JCM 4626 / CBS 651.72 / NBRC 13350 / KCC S-0626 / ISP 5235)</name>
    <dbReference type="NCBI Taxonomy" id="455632"/>
    <lineage>
        <taxon>Bacteria</taxon>
        <taxon>Bacillati</taxon>
        <taxon>Actinomycetota</taxon>
        <taxon>Actinomycetes</taxon>
        <taxon>Kitasatosporales</taxon>
        <taxon>Streptomycetaceae</taxon>
        <taxon>Streptomyces</taxon>
    </lineage>
</organism>
<name>AFSA_STRGG</name>
<proteinExistence type="evidence at protein level"/>
<accession>B1VN93</accession>
<dbReference type="EC" id="2.3.1.277" evidence="1"/>
<dbReference type="EMBL" id="AP009493">
    <property type="protein sequence ID" value="BAG23718.1"/>
    <property type="molecule type" value="Genomic_DNA"/>
</dbReference>
<dbReference type="RefSeq" id="WP_003971211.1">
    <property type="nucleotide sequence ID" value="NC_010572.1"/>
</dbReference>
<dbReference type="SMR" id="B1VN93"/>
<dbReference type="KEGG" id="sgr:SGR_6889"/>
<dbReference type="PATRIC" id="fig|455632.4.peg.7071"/>
<dbReference type="eggNOG" id="ENOG50342P2">
    <property type="taxonomic scope" value="Bacteria"/>
</dbReference>
<dbReference type="HOGENOM" id="CLU_061800_0_0_11"/>
<dbReference type="Proteomes" id="UP000001685">
    <property type="component" value="Chromosome"/>
</dbReference>
<dbReference type="GO" id="GO:0016740">
    <property type="term" value="F:transferase activity"/>
    <property type="evidence" value="ECO:0007669"/>
    <property type="project" value="UniProtKB-KW"/>
</dbReference>
<dbReference type="InterPro" id="IPR047757">
    <property type="entry name" value="AfsA-like"/>
</dbReference>
<dbReference type="InterPro" id="IPR005509">
    <property type="entry name" value="AfsA_hotdog_dom"/>
</dbReference>
<dbReference type="InterPro" id="IPR029069">
    <property type="entry name" value="HotDog_dom_sf"/>
</dbReference>
<dbReference type="NCBIfam" id="NF041195">
    <property type="entry name" value="ScbA_BarX_GamBu"/>
    <property type="match status" value="1"/>
</dbReference>
<dbReference type="Pfam" id="PF03756">
    <property type="entry name" value="AfsA"/>
    <property type="match status" value="2"/>
</dbReference>
<dbReference type="SUPFAM" id="SSF54637">
    <property type="entry name" value="Thioesterase/thiol ester dehydrase-isomerase"/>
    <property type="match status" value="1"/>
</dbReference>